<organism>
    <name type="scientific">Clostridium tetani (strain Massachusetts / E88)</name>
    <dbReference type="NCBI Taxonomy" id="212717"/>
    <lineage>
        <taxon>Bacteria</taxon>
        <taxon>Bacillati</taxon>
        <taxon>Bacillota</taxon>
        <taxon>Clostridia</taxon>
        <taxon>Eubacteriales</taxon>
        <taxon>Clostridiaceae</taxon>
        <taxon>Clostridium</taxon>
    </lineage>
</organism>
<sequence>MNITGVIVEYNPFHNGHLYHLNKTKEITDCDGIVAVMSGHFVQRGSPALLDKWTRAKLALLNGVDLVLELPTIYSTSSAEFFAYGATSLLDGINIVNNLCFGSELGNIDIILKTSKILQEEPLSFKEDLKNFIDKGISFPNAREKALINFMRKGKNSFDFNNVLCLSNNILALEYCKNLFKINSNIKPFTVKRQGSHYNCLHLRDNLSSATAIREYIGNNENLDNLVKSVPETVLNMLKNFQNEQCKFPFEEDMFTYIKHKYFSNTGSIENLPDVSEGIHNRIYRALDTCNTLKEAMDMIKTKRYTYTRIKRILCHYFIGMDMINSDELRRKPCPYARILGFNRKGQDILKLIKKSSNIPIINKIPKKIDSTLNLDINATKCYSLLNKKVNPLDDFLKKPVLK</sequence>
<gene>
    <name evidence="1" type="primary">tmcAL</name>
    <name type="ordered locus">CTC_01238</name>
</gene>
<feature type="chain" id="PRO_0000147163" description="tRNA(Met) cytidine acetate ligase">
    <location>
        <begin position="1"/>
        <end position="403"/>
    </location>
</feature>
<feature type="binding site" evidence="1">
    <location>
        <begin position="7"/>
        <end position="20"/>
    </location>
    <ligand>
        <name>ATP</name>
        <dbReference type="ChEBI" id="CHEBI:30616"/>
    </ligand>
</feature>
<feature type="binding site" evidence="1">
    <location>
        <position position="102"/>
    </location>
    <ligand>
        <name>ATP</name>
        <dbReference type="ChEBI" id="CHEBI:30616"/>
    </ligand>
</feature>
<feature type="binding site" evidence="1">
    <location>
        <position position="168"/>
    </location>
    <ligand>
        <name>ATP</name>
        <dbReference type="ChEBI" id="CHEBI:30616"/>
    </ligand>
</feature>
<feature type="binding site" evidence="1">
    <location>
        <position position="193"/>
    </location>
    <ligand>
        <name>ATP</name>
        <dbReference type="ChEBI" id="CHEBI:30616"/>
    </ligand>
</feature>
<reference key="1">
    <citation type="journal article" date="2003" name="Proc. Natl. Acad. Sci. U.S.A.">
        <title>The genome sequence of Clostridium tetani, the causative agent of tetanus disease.</title>
        <authorList>
            <person name="Brueggemann H."/>
            <person name="Baeumer S."/>
            <person name="Fricke W.F."/>
            <person name="Wiezer A."/>
            <person name="Liesegang H."/>
            <person name="Decker I."/>
            <person name="Herzberg C."/>
            <person name="Martinez-Arias R."/>
            <person name="Merkl R."/>
            <person name="Henne A."/>
            <person name="Gottschalk G."/>
        </authorList>
    </citation>
    <scope>NUCLEOTIDE SEQUENCE [LARGE SCALE GENOMIC DNA]</scope>
    <source>
        <strain>Massachusetts / E88</strain>
    </source>
</reference>
<dbReference type="EC" id="6.3.4.-" evidence="1"/>
<dbReference type="EMBL" id="AE015927">
    <property type="protein sequence ID" value="AAO35806.1"/>
    <property type="molecule type" value="Genomic_DNA"/>
</dbReference>
<dbReference type="RefSeq" id="WP_011099468.1">
    <property type="nucleotide sequence ID" value="NC_004557.1"/>
</dbReference>
<dbReference type="SMR" id="Q895N4"/>
<dbReference type="STRING" id="212717.CTC_01238"/>
<dbReference type="GeneID" id="24254252"/>
<dbReference type="KEGG" id="ctc:CTC_01238"/>
<dbReference type="HOGENOM" id="CLU_038915_0_1_9"/>
<dbReference type="OrthoDB" id="9769796at2"/>
<dbReference type="Proteomes" id="UP000001412">
    <property type="component" value="Chromosome"/>
</dbReference>
<dbReference type="GO" id="GO:0005737">
    <property type="term" value="C:cytoplasm"/>
    <property type="evidence" value="ECO:0007669"/>
    <property type="project" value="UniProtKB-SubCell"/>
</dbReference>
<dbReference type="GO" id="GO:0005524">
    <property type="term" value="F:ATP binding"/>
    <property type="evidence" value="ECO:0007669"/>
    <property type="project" value="UniProtKB-KW"/>
</dbReference>
<dbReference type="GO" id="GO:0016879">
    <property type="term" value="F:ligase activity, forming carbon-nitrogen bonds"/>
    <property type="evidence" value="ECO:0007669"/>
    <property type="project" value="UniProtKB-UniRule"/>
</dbReference>
<dbReference type="GO" id="GO:0000049">
    <property type="term" value="F:tRNA binding"/>
    <property type="evidence" value="ECO:0007669"/>
    <property type="project" value="UniProtKB-KW"/>
</dbReference>
<dbReference type="GO" id="GO:0006400">
    <property type="term" value="P:tRNA modification"/>
    <property type="evidence" value="ECO:0007669"/>
    <property type="project" value="UniProtKB-UniRule"/>
</dbReference>
<dbReference type="Gene3D" id="3.40.50.620">
    <property type="entry name" value="HUPs"/>
    <property type="match status" value="1"/>
</dbReference>
<dbReference type="HAMAP" id="MF_01539">
    <property type="entry name" value="TmcAL"/>
    <property type="match status" value="1"/>
</dbReference>
<dbReference type="InterPro" id="IPR014729">
    <property type="entry name" value="Rossmann-like_a/b/a_fold"/>
</dbReference>
<dbReference type="InterPro" id="IPR008513">
    <property type="entry name" value="tRNA(Met)_cyd_acetate_ligase"/>
</dbReference>
<dbReference type="NCBIfam" id="NF010191">
    <property type="entry name" value="PRK13670.1"/>
    <property type="match status" value="1"/>
</dbReference>
<dbReference type="PANTHER" id="PTHR37825">
    <property type="entry name" value="TRNA(MET) CYTIDINE ACETATE LIGASE"/>
    <property type="match status" value="1"/>
</dbReference>
<dbReference type="PANTHER" id="PTHR37825:SF1">
    <property type="entry name" value="TRNA(MET) CYTIDINE ACETATE LIGASE"/>
    <property type="match status" value="1"/>
</dbReference>
<dbReference type="Pfam" id="PF05636">
    <property type="entry name" value="HIGH_NTase1"/>
    <property type="match status" value="1"/>
</dbReference>
<dbReference type="SUPFAM" id="SSF52374">
    <property type="entry name" value="Nucleotidylyl transferase"/>
    <property type="match status" value="1"/>
</dbReference>
<keyword id="KW-0067">ATP-binding</keyword>
<keyword id="KW-0963">Cytoplasm</keyword>
<keyword id="KW-0436">Ligase</keyword>
<keyword id="KW-0547">Nucleotide-binding</keyword>
<keyword id="KW-1185">Reference proteome</keyword>
<keyword id="KW-0694">RNA-binding</keyword>
<keyword id="KW-0819">tRNA processing</keyword>
<keyword id="KW-0820">tRNA-binding</keyword>
<evidence type="ECO:0000255" key="1">
    <source>
        <dbReference type="HAMAP-Rule" id="MF_01539"/>
    </source>
</evidence>
<proteinExistence type="inferred from homology"/>
<protein>
    <recommendedName>
        <fullName evidence="1">tRNA(Met) cytidine acetate ligase</fullName>
        <ecNumber evidence="1">6.3.4.-</ecNumber>
    </recommendedName>
</protein>
<accession>Q895N4</accession>
<comment type="function">
    <text evidence="1">Catalyzes the formation of N(4)-acetylcytidine (ac(4)C) at the wobble position of elongator tRNA(Met), using acetate and ATP as substrates. First activates an acetate ion to form acetyladenylate (Ac-AMP) and then transfers the acetyl group to tRNA to form ac(4)C34.</text>
</comment>
<comment type="catalytic activity">
    <reaction evidence="1">
        <text>cytidine(34) in elongator tRNA(Met) + acetate + ATP = N(4)-acetylcytidine(34) in elongator tRNA(Met) + AMP + diphosphate</text>
        <dbReference type="Rhea" id="RHEA:58144"/>
        <dbReference type="Rhea" id="RHEA-COMP:10693"/>
        <dbReference type="Rhea" id="RHEA-COMP:10694"/>
        <dbReference type="ChEBI" id="CHEBI:30089"/>
        <dbReference type="ChEBI" id="CHEBI:30616"/>
        <dbReference type="ChEBI" id="CHEBI:33019"/>
        <dbReference type="ChEBI" id="CHEBI:74900"/>
        <dbReference type="ChEBI" id="CHEBI:82748"/>
        <dbReference type="ChEBI" id="CHEBI:456215"/>
    </reaction>
</comment>
<comment type="subcellular location">
    <subcellularLocation>
        <location evidence="1">Cytoplasm</location>
    </subcellularLocation>
</comment>
<comment type="similarity">
    <text evidence="1">Belongs to the TmcAL family.</text>
</comment>
<name>TMCAL_CLOTE</name>